<sequence>MKAVIFAYHDMGCQGVQAVLDAGYEIAAIFTHADNPAENTFFGSVSRLAAELGIPVYAPDNVNHPIWVDRIAELAPDIIFSFYYRNLLSEEILHLAPAGAFNLHGSLLPAYRGRAPLNWVLVNGESETGVTLHRMVKRADAGEIVASQRVAIAQDDVALTLHHKLCQAARQLLNSILPTMKCGDIPSVPQRESDATYYGRRRPEDGLIDWHKPVSTVHNLVRAVAAPWPGAFSYNGSQKFTIWSSRICPDAQGALPGSVISVSPLRVACADGALEIITGQAGDGITVQGSQLAQTLGLVAGARLNRPPATSGKRRIRVLILGVNGFIGNHLTERLLNEENYEVYGMDIGSNAISRFLLHPRFHFVEGDISIHSEWIEYHVKKCDVVLPLVAIATPIEYTRNPLRVFELDFEENLRIIRYCVKYRKRVVFPSTSEVYGMCTDASFDEDKSNLIVGPVNKPRWIYSVSKQLLDRVIWAYGEKEGLRFTLFRPFNWMGPRLDSLNAARIGSSRAITQLILNLVEGTPIKLIDGGQQKRCFTDIRDGIEALFRIIVNDGDRCDGKIINIGNPDNEASIQELATLLLDSFDKHPLRCHFPPFAGFQVVESRSYYGKGYQDVAHRKPSIDNARRCLGWEPSIAMRDTVEETLDFFLRSVDVAERAS</sequence>
<accession>B5R272</accession>
<gene>
    <name evidence="1" type="primary">arnA</name>
    <name type="ordered locus">SEN2281</name>
</gene>
<organism>
    <name type="scientific">Salmonella enteritidis PT4 (strain P125109)</name>
    <dbReference type="NCBI Taxonomy" id="550537"/>
    <lineage>
        <taxon>Bacteria</taxon>
        <taxon>Pseudomonadati</taxon>
        <taxon>Pseudomonadota</taxon>
        <taxon>Gammaproteobacteria</taxon>
        <taxon>Enterobacterales</taxon>
        <taxon>Enterobacteriaceae</taxon>
        <taxon>Salmonella</taxon>
    </lineage>
</organism>
<name>ARNA_SALEP</name>
<dbReference type="EC" id="2.1.2.13" evidence="1"/>
<dbReference type="EC" id="1.1.1.305" evidence="1"/>
<dbReference type="EMBL" id="AM933172">
    <property type="protein sequence ID" value="CAR33865.1"/>
    <property type="molecule type" value="Genomic_DNA"/>
</dbReference>
<dbReference type="RefSeq" id="WP_000648764.1">
    <property type="nucleotide sequence ID" value="NC_011294.1"/>
</dbReference>
<dbReference type="SMR" id="B5R272"/>
<dbReference type="KEGG" id="set:SEN2281"/>
<dbReference type="HOGENOM" id="CLU_007383_23_2_6"/>
<dbReference type="UniPathway" id="UPA00030"/>
<dbReference type="UniPathway" id="UPA00032">
    <property type="reaction ID" value="UER00492"/>
</dbReference>
<dbReference type="UniPathway" id="UPA00032">
    <property type="reaction ID" value="UER00494"/>
</dbReference>
<dbReference type="Proteomes" id="UP000000613">
    <property type="component" value="Chromosome"/>
</dbReference>
<dbReference type="GO" id="GO:0016020">
    <property type="term" value="C:membrane"/>
    <property type="evidence" value="ECO:0007669"/>
    <property type="project" value="GOC"/>
</dbReference>
<dbReference type="GO" id="GO:0016831">
    <property type="term" value="F:carboxy-lyase activity"/>
    <property type="evidence" value="ECO:0007669"/>
    <property type="project" value="InterPro"/>
</dbReference>
<dbReference type="GO" id="GO:0099619">
    <property type="term" value="F:UDP-4-amino-4-deoxy-L-arabinose formyltransferase activity"/>
    <property type="evidence" value="ECO:0007669"/>
    <property type="project" value="UniProtKB-EC"/>
</dbReference>
<dbReference type="GO" id="GO:0099618">
    <property type="term" value="F:UDP-glucuronate dehydrogenase activity"/>
    <property type="evidence" value="ECO:0007669"/>
    <property type="project" value="UniProtKB-EC"/>
</dbReference>
<dbReference type="GO" id="GO:0009245">
    <property type="term" value="P:lipid A biosynthetic process"/>
    <property type="evidence" value="ECO:0007669"/>
    <property type="project" value="UniProtKB-KW"/>
</dbReference>
<dbReference type="GO" id="GO:0009103">
    <property type="term" value="P:lipopolysaccharide biosynthetic process"/>
    <property type="evidence" value="ECO:0007669"/>
    <property type="project" value="UniProtKB-UniRule"/>
</dbReference>
<dbReference type="GO" id="GO:0046677">
    <property type="term" value="P:response to antibiotic"/>
    <property type="evidence" value="ECO:0007669"/>
    <property type="project" value="UniProtKB-KW"/>
</dbReference>
<dbReference type="CDD" id="cd08702">
    <property type="entry name" value="Arna_FMT_C"/>
    <property type="match status" value="1"/>
</dbReference>
<dbReference type="CDD" id="cd05257">
    <property type="entry name" value="Arna_like_SDR_e"/>
    <property type="match status" value="1"/>
</dbReference>
<dbReference type="FunFam" id="3.40.50.720:FF:000197">
    <property type="entry name" value="Bifunctional polymyxin resistance protein ArnA"/>
    <property type="match status" value="1"/>
</dbReference>
<dbReference type="Gene3D" id="3.40.50.12230">
    <property type="match status" value="1"/>
</dbReference>
<dbReference type="Gene3D" id="3.40.50.720">
    <property type="entry name" value="NAD(P)-binding Rossmann-like Domain"/>
    <property type="match status" value="1"/>
</dbReference>
<dbReference type="HAMAP" id="MF_01166">
    <property type="entry name" value="ArnA"/>
    <property type="match status" value="1"/>
</dbReference>
<dbReference type="InterPro" id="IPR045869">
    <property type="entry name" value="Arna-like_SDR_e"/>
</dbReference>
<dbReference type="InterPro" id="IPR021168">
    <property type="entry name" value="Bifun_polymyxin_resist_ArnA"/>
</dbReference>
<dbReference type="InterPro" id="IPR001509">
    <property type="entry name" value="Epimerase_deHydtase"/>
</dbReference>
<dbReference type="InterPro" id="IPR005793">
    <property type="entry name" value="Formyl_trans_C"/>
</dbReference>
<dbReference type="InterPro" id="IPR002376">
    <property type="entry name" value="Formyl_transf_N"/>
</dbReference>
<dbReference type="InterPro" id="IPR036477">
    <property type="entry name" value="Formyl_transf_N_sf"/>
</dbReference>
<dbReference type="InterPro" id="IPR011034">
    <property type="entry name" value="Formyl_transferase-like_C_sf"/>
</dbReference>
<dbReference type="InterPro" id="IPR050177">
    <property type="entry name" value="Lipid_A_modif_metabolic_enz"/>
</dbReference>
<dbReference type="InterPro" id="IPR036291">
    <property type="entry name" value="NAD(P)-bd_dom_sf"/>
</dbReference>
<dbReference type="NCBIfam" id="NF005414">
    <property type="entry name" value="PRK06988.1"/>
    <property type="match status" value="1"/>
</dbReference>
<dbReference type="NCBIfam" id="NF005998">
    <property type="entry name" value="PRK08125.1"/>
    <property type="match status" value="1"/>
</dbReference>
<dbReference type="NCBIfam" id="NF008872">
    <property type="entry name" value="PRK11908.1"/>
    <property type="match status" value="1"/>
</dbReference>
<dbReference type="PANTHER" id="PTHR43245">
    <property type="entry name" value="BIFUNCTIONAL POLYMYXIN RESISTANCE PROTEIN ARNA"/>
    <property type="match status" value="1"/>
</dbReference>
<dbReference type="PANTHER" id="PTHR43245:SF13">
    <property type="entry name" value="UDP-D-APIOSE_UDP-D-XYLOSE SYNTHASE 2"/>
    <property type="match status" value="1"/>
</dbReference>
<dbReference type="Pfam" id="PF01370">
    <property type="entry name" value="Epimerase"/>
    <property type="match status" value="1"/>
</dbReference>
<dbReference type="Pfam" id="PF02911">
    <property type="entry name" value="Formyl_trans_C"/>
    <property type="match status" value="1"/>
</dbReference>
<dbReference type="Pfam" id="PF00551">
    <property type="entry name" value="Formyl_trans_N"/>
    <property type="match status" value="1"/>
</dbReference>
<dbReference type="PIRSF" id="PIRSF036506">
    <property type="entry name" value="Bifun_polymyxin_resist_ArnA"/>
    <property type="match status" value="1"/>
</dbReference>
<dbReference type="SUPFAM" id="SSF50486">
    <property type="entry name" value="FMT C-terminal domain-like"/>
    <property type="match status" value="1"/>
</dbReference>
<dbReference type="SUPFAM" id="SSF53328">
    <property type="entry name" value="Formyltransferase"/>
    <property type="match status" value="1"/>
</dbReference>
<dbReference type="SUPFAM" id="SSF51735">
    <property type="entry name" value="NAD(P)-binding Rossmann-fold domains"/>
    <property type="match status" value="1"/>
</dbReference>
<protein>
    <recommendedName>
        <fullName evidence="1">Bifunctional polymyxin resistance protein ArnA</fullName>
    </recommendedName>
    <domain>
        <recommendedName>
            <fullName evidence="1">UDP-4-amino-4-deoxy-L-arabinose formyltransferase</fullName>
            <ecNumber evidence="1">2.1.2.13</ecNumber>
        </recommendedName>
        <alternativeName>
            <fullName evidence="1">ArnAFT</fullName>
        </alternativeName>
        <alternativeName>
            <fullName evidence="1">UDP-L-Ara4N formyltransferase</fullName>
        </alternativeName>
    </domain>
    <domain>
        <recommendedName>
            <fullName evidence="1">UDP-glucuronic acid oxidase, UDP-4-keto-hexauronic acid decarboxylating</fullName>
            <ecNumber evidence="1">1.1.1.305</ecNumber>
        </recommendedName>
        <alternativeName>
            <fullName evidence="1">ArnADH</fullName>
        </alternativeName>
        <alternativeName>
            <fullName evidence="1">UDP-GlcUA decarboxylase</fullName>
        </alternativeName>
        <alternativeName>
            <fullName evidence="1">UDP-glucuronic acid dehydrogenase</fullName>
        </alternativeName>
    </domain>
</protein>
<comment type="function">
    <text evidence="1">Bifunctional enzyme that catalyzes the oxidative decarboxylation of UDP-glucuronic acid (UDP-GlcUA) to UDP-4-keto-arabinose (UDP-Ara4O) and the addition of a formyl group to UDP-4-amino-4-deoxy-L-arabinose (UDP-L-Ara4N) to form UDP-L-4-formamido-arabinose (UDP-L-Ara4FN). The modified arabinose is attached to lipid A and is required for resistance to polymyxin and cationic antimicrobial peptides.</text>
</comment>
<comment type="catalytic activity">
    <reaction evidence="1">
        <text>UDP-alpha-D-glucuronate + NAD(+) = UDP-beta-L-threo-pentopyranos-4-ulose + CO2 + NADH</text>
        <dbReference type="Rhea" id="RHEA:24702"/>
        <dbReference type="ChEBI" id="CHEBI:16526"/>
        <dbReference type="ChEBI" id="CHEBI:57540"/>
        <dbReference type="ChEBI" id="CHEBI:57945"/>
        <dbReference type="ChEBI" id="CHEBI:58052"/>
        <dbReference type="ChEBI" id="CHEBI:58710"/>
        <dbReference type="EC" id="1.1.1.305"/>
    </reaction>
</comment>
<comment type="catalytic activity">
    <reaction evidence="1">
        <text>UDP-4-amino-4-deoxy-beta-L-arabinose + (6R)-10-formyltetrahydrofolate = UDP-4-deoxy-4-formamido-beta-L-arabinose + (6S)-5,6,7,8-tetrahydrofolate + H(+)</text>
        <dbReference type="Rhea" id="RHEA:24706"/>
        <dbReference type="ChEBI" id="CHEBI:15378"/>
        <dbReference type="ChEBI" id="CHEBI:57453"/>
        <dbReference type="ChEBI" id="CHEBI:58708"/>
        <dbReference type="ChEBI" id="CHEBI:58709"/>
        <dbReference type="ChEBI" id="CHEBI:195366"/>
        <dbReference type="EC" id="2.1.2.13"/>
    </reaction>
</comment>
<comment type="pathway">
    <text evidence="1">Nucleotide-sugar biosynthesis; UDP-4-deoxy-4-formamido-beta-L-arabinose biosynthesis; UDP-4-deoxy-4-formamido-beta-L-arabinose from UDP-alpha-D-glucuronate: step 1/3.</text>
</comment>
<comment type="pathway">
    <text evidence="1">Nucleotide-sugar biosynthesis; UDP-4-deoxy-4-formamido-beta-L-arabinose biosynthesis; UDP-4-deoxy-4-formamido-beta-L-arabinose from UDP-alpha-D-glucuronate: step 3/3.</text>
</comment>
<comment type="pathway">
    <text evidence="1">Bacterial outer membrane biogenesis; lipopolysaccharide biosynthesis.</text>
</comment>
<comment type="subunit">
    <text evidence="1">Homohexamer, formed by a dimer of trimers.</text>
</comment>
<comment type="similarity">
    <text evidence="1">In the N-terminal section; belongs to the Fmt family. UDP-L-Ara4N formyltransferase subfamily.</text>
</comment>
<comment type="similarity">
    <text evidence="1">In the C-terminal section; belongs to the NAD(P)-dependent epimerase/dehydratase family. UDP-glucuronic acid decarboxylase subfamily.</text>
</comment>
<feature type="chain" id="PRO_1000137947" description="Bifunctional polymyxin resistance protein ArnA">
    <location>
        <begin position="1"/>
        <end position="660"/>
    </location>
</feature>
<feature type="region of interest" description="Formyltransferase ArnAFT">
    <location>
        <begin position="1"/>
        <end position="304"/>
    </location>
</feature>
<feature type="region of interest" description="Dehydrogenase ArnADH">
    <location>
        <begin position="314"/>
        <end position="660"/>
    </location>
</feature>
<feature type="active site" description="Proton donor; for formyltransferase activity" evidence="1">
    <location>
        <position position="104"/>
    </location>
</feature>
<feature type="active site" description="Proton acceptor; for decarboxylase activity" evidence="1">
    <location>
        <position position="434"/>
    </location>
</feature>
<feature type="active site" description="Proton donor; for decarboxylase activity" evidence="1">
    <location>
        <position position="619"/>
    </location>
</feature>
<feature type="binding site" evidence="1">
    <location>
        <position position="114"/>
    </location>
    <ligand>
        <name>(6R)-10-formyltetrahydrofolate</name>
        <dbReference type="ChEBI" id="CHEBI:195366"/>
    </ligand>
</feature>
<feature type="binding site" evidence="1">
    <location>
        <begin position="136"/>
        <end position="140"/>
    </location>
    <ligand>
        <name>(6R)-10-formyltetrahydrofolate</name>
        <dbReference type="ChEBI" id="CHEBI:195366"/>
    </ligand>
</feature>
<feature type="binding site" evidence="1">
    <location>
        <position position="347"/>
    </location>
    <ligand>
        <name>NAD(+)</name>
        <dbReference type="ChEBI" id="CHEBI:57540"/>
    </ligand>
</feature>
<feature type="binding site" evidence="1">
    <location>
        <begin position="368"/>
        <end position="369"/>
    </location>
    <ligand>
        <name>NAD(+)</name>
        <dbReference type="ChEBI" id="CHEBI:57540"/>
    </ligand>
</feature>
<feature type="binding site" evidence="1">
    <location>
        <position position="393"/>
    </location>
    <ligand>
        <name>UDP-alpha-D-glucuronate</name>
        <dbReference type="ChEBI" id="CHEBI:58052"/>
    </ligand>
</feature>
<feature type="binding site" evidence="1">
    <location>
        <position position="398"/>
    </location>
    <ligand>
        <name>UDP-alpha-D-glucuronate</name>
        <dbReference type="ChEBI" id="CHEBI:58052"/>
    </ligand>
</feature>
<feature type="binding site" evidence="1">
    <location>
        <begin position="432"/>
        <end position="433"/>
    </location>
    <ligand>
        <name>UDP-alpha-D-glucuronate</name>
        <dbReference type="ChEBI" id="CHEBI:58052"/>
    </ligand>
</feature>
<feature type="binding site" evidence="1">
    <location>
        <position position="460"/>
    </location>
    <ligand>
        <name>UDP-alpha-D-glucuronate</name>
        <dbReference type="ChEBI" id="CHEBI:58052"/>
    </ligand>
</feature>
<feature type="binding site" evidence="1">
    <location>
        <position position="492"/>
    </location>
    <ligand>
        <name>UDP-alpha-D-glucuronate</name>
        <dbReference type="ChEBI" id="CHEBI:58052"/>
    </ligand>
</feature>
<feature type="binding site" evidence="1">
    <location>
        <begin position="526"/>
        <end position="535"/>
    </location>
    <ligand>
        <name>UDP-alpha-D-glucuronate</name>
        <dbReference type="ChEBI" id="CHEBI:58052"/>
    </ligand>
</feature>
<feature type="binding site" evidence="1">
    <location>
        <position position="613"/>
    </location>
    <ligand>
        <name>UDP-alpha-D-glucuronate</name>
        <dbReference type="ChEBI" id="CHEBI:58052"/>
    </ligand>
</feature>
<feature type="site" description="Transition state stabilizer" evidence="1">
    <location>
        <position position="102"/>
    </location>
</feature>
<feature type="site" description="Raises pKa of active site His" evidence="1">
    <location>
        <position position="140"/>
    </location>
</feature>
<keyword id="KW-0046">Antibiotic resistance</keyword>
<keyword id="KW-0441">Lipid A biosynthesis</keyword>
<keyword id="KW-0444">Lipid biosynthesis</keyword>
<keyword id="KW-0443">Lipid metabolism</keyword>
<keyword id="KW-0448">Lipopolysaccharide biosynthesis</keyword>
<keyword id="KW-0511">Multifunctional enzyme</keyword>
<keyword id="KW-0520">NAD</keyword>
<keyword id="KW-0560">Oxidoreductase</keyword>
<keyword id="KW-0808">Transferase</keyword>
<evidence type="ECO:0000255" key="1">
    <source>
        <dbReference type="HAMAP-Rule" id="MF_01166"/>
    </source>
</evidence>
<proteinExistence type="inferred from homology"/>
<reference key="1">
    <citation type="journal article" date="2008" name="Genome Res.">
        <title>Comparative genome analysis of Salmonella enteritidis PT4 and Salmonella gallinarum 287/91 provides insights into evolutionary and host adaptation pathways.</title>
        <authorList>
            <person name="Thomson N.R."/>
            <person name="Clayton D.J."/>
            <person name="Windhorst D."/>
            <person name="Vernikos G."/>
            <person name="Davidson S."/>
            <person name="Churcher C."/>
            <person name="Quail M.A."/>
            <person name="Stevens M."/>
            <person name="Jones M.A."/>
            <person name="Watson M."/>
            <person name="Barron A."/>
            <person name="Layton A."/>
            <person name="Pickard D."/>
            <person name="Kingsley R.A."/>
            <person name="Bignell A."/>
            <person name="Clark L."/>
            <person name="Harris B."/>
            <person name="Ormond D."/>
            <person name="Abdellah Z."/>
            <person name="Brooks K."/>
            <person name="Cherevach I."/>
            <person name="Chillingworth T."/>
            <person name="Woodward J."/>
            <person name="Norberczak H."/>
            <person name="Lord A."/>
            <person name="Arrowsmith C."/>
            <person name="Jagels K."/>
            <person name="Moule S."/>
            <person name="Mungall K."/>
            <person name="Saunders M."/>
            <person name="Whitehead S."/>
            <person name="Chabalgoity J.A."/>
            <person name="Maskell D."/>
            <person name="Humphreys T."/>
            <person name="Roberts M."/>
            <person name="Barrow P.A."/>
            <person name="Dougan G."/>
            <person name="Parkhill J."/>
        </authorList>
    </citation>
    <scope>NUCLEOTIDE SEQUENCE [LARGE SCALE GENOMIC DNA]</scope>
    <source>
        <strain>P125109</strain>
    </source>
</reference>